<name>MOAC_BRUA2</name>
<feature type="chain" id="PRO_1000054072" description="Cyclic pyranopterin monophosphate synthase">
    <location>
        <begin position="1"/>
        <end position="165"/>
    </location>
</feature>
<feature type="active site" evidence="1">
    <location>
        <position position="129"/>
    </location>
</feature>
<feature type="binding site" evidence="1">
    <location>
        <begin position="76"/>
        <end position="78"/>
    </location>
    <ligand>
        <name>substrate</name>
    </ligand>
</feature>
<feature type="binding site" evidence="1">
    <location>
        <begin position="114"/>
        <end position="115"/>
    </location>
    <ligand>
        <name>substrate</name>
    </ligand>
</feature>
<sequence length="165" mass="17506">MSGKLTHIDQTGAANMVDVGSKDETERQAVAEGAVRMKPETLALILEGNAAKGDVIGTARLAGIMAAKRTSDLIPLCHPLMLTKVAVEIEPDENLPGLRVRALARLKGRTGVEMEALTAASVTCLTIYDMAKAVDRHMEIGSIRVIEKSGGKSGDWAVSDPALMR</sequence>
<organism>
    <name type="scientific">Brucella abortus (strain 2308)</name>
    <dbReference type="NCBI Taxonomy" id="359391"/>
    <lineage>
        <taxon>Bacteria</taxon>
        <taxon>Pseudomonadati</taxon>
        <taxon>Pseudomonadota</taxon>
        <taxon>Alphaproteobacteria</taxon>
        <taxon>Hyphomicrobiales</taxon>
        <taxon>Brucellaceae</taxon>
        <taxon>Brucella/Ochrobactrum group</taxon>
        <taxon>Brucella</taxon>
    </lineage>
</organism>
<gene>
    <name evidence="1" type="primary">moaC</name>
    <name type="ordered locus">BAB1_1165</name>
</gene>
<accession>Q2YRR3</accession>
<proteinExistence type="inferred from homology"/>
<comment type="function">
    <text evidence="1">Catalyzes the conversion of (8S)-3',8-cyclo-7,8-dihydroguanosine 5'-triphosphate to cyclic pyranopterin monophosphate (cPMP).</text>
</comment>
<comment type="catalytic activity">
    <reaction evidence="1">
        <text>(8S)-3',8-cyclo-7,8-dihydroguanosine 5'-triphosphate = cyclic pyranopterin phosphate + diphosphate</text>
        <dbReference type="Rhea" id="RHEA:49580"/>
        <dbReference type="ChEBI" id="CHEBI:33019"/>
        <dbReference type="ChEBI" id="CHEBI:59648"/>
        <dbReference type="ChEBI" id="CHEBI:131766"/>
        <dbReference type="EC" id="4.6.1.17"/>
    </reaction>
</comment>
<comment type="pathway">
    <text evidence="1">Cofactor biosynthesis; molybdopterin biosynthesis.</text>
</comment>
<comment type="subunit">
    <text evidence="1">Homohexamer; trimer of dimers.</text>
</comment>
<comment type="similarity">
    <text evidence="1">Belongs to the MoaC family.</text>
</comment>
<protein>
    <recommendedName>
        <fullName evidence="1">Cyclic pyranopterin monophosphate synthase</fullName>
        <ecNumber evidence="1">4.6.1.17</ecNumber>
    </recommendedName>
    <alternativeName>
        <fullName evidence="1">Molybdenum cofactor biosynthesis protein C</fullName>
    </alternativeName>
</protein>
<reference key="1">
    <citation type="journal article" date="2005" name="Infect. Immun.">
        <title>Whole-genome analyses of speciation events in pathogenic Brucellae.</title>
        <authorList>
            <person name="Chain P.S."/>
            <person name="Comerci D.J."/>
            <person name="Tolmasky M.E."/>
            <person name="Larimer F.W."/>
            <person name="Malfatti S.A."/>
            <person name="Vergez L.M."/>
            <person name="Aguero F."/>
            <person name="Land M.L."/>
            <person name="Ugalde R.A."/>
            <person name="Garcia E."/>
        </authorList>
    </citation>
    <scope>NUCLEOTIDE SEQUENCE [LARGE SCALE GENOMIC DNA]</scope>
    <source>
        <strain>2308</strain>
    </source>
</reference>
<evidence type="ECO:0000255" key="1">
    <source>
        <dbReference type="HAMAP-Rule" id="MF_01224"/>
    </source>
</evidence>
<keyword id="KW-0456">Lyase</keyword>
<keyword id="KW-0501">Molybdenum cofactor biosynthesis</keyword>
<keyword id="KW-1185">Reference proteome</keyword>
<dbReference type="EC" id="4.6.1.17" evidence="1"/>
<dbReference type="EMBL" id="AM040264">
    <property type="protein sequence ID" value="CAJ11121.1"/>
    <property type="molecule type" value="Genomic_DNA"/>
</dbReference>
<dbReference type="RefSeq" id="WP_002964270.1">
    <property type="nucleotide sequence ID" value="NZ_KN046823.1"/>
</dbReference>
<dbReference type="SMR" id="Q2YRR3"/>
<dbReference type="STRING" id="359391.BAB1_1165"/>
<dbReference type="GeneID" id="93016522"/>
<dbReference type="KEGG" id="bmf:BAB1_1165"/>
<dbReference type="PATRIC" id="fig|359391.11.peg.63"/>
<dbReference type="HOGENOM" id="CLU_074693_1_1_5"/>
<dbReference type="PhylomeDB" id="Q2YRR3"/>
<dbReference type="UniPathway" id="UPA00344"/>
<dbReference type="Proteomes" id="UP000002719">
    <property type="component" value="Chromosome I"/>
</dbReference>
<dbReference type="GO" id="GO:0061799">
    <property type="term" value="F:cyclic pyranopterin monophosphate synthase activity"/>
    <property type="evidence" value="ECO:0007669"/>
    <property type="project" value="UniProtKB-UniRule"/>
</dbReference>
<dbReference type="GO" id="GO:0006777">
    <property type="term" value="P:Mo-molybdopterin cofactor biosynthetic process"/>
    <property type="evidence" value="ECO:0007669"/>
    <property type="project" value="UniProtKB-UniRule"/>
</dbReference>
<dbReference type="CDD" id="cd01420">
    <property type="entry name" value="MoaC_PE"/>
    <property type="match status" value="1"/>
</dbReference>
<dbReference type="Gene3D" id="3.30.70.640">
    <property type="entry name" value="Molybdopterin cofactor biosynthesis C (MoaC) domain"/>
    <property type="match status" value="1"/>
</dbReference>
<dbReference type="HAMAP" id="MF_01224_B">
    <property type="entry name" value="MoaC_B"/>
    <property type="match status" value="1"/>
</dbReference>
<dbReference type="InterPro" id="IPR023045">
    <property type="entry name" value="MoaC"/>
</dbReference>
<dbReference type="InterPro" id="IPR047594">
    <property type="entry name" value="MoaC_bact/euk"/>
</dbReference>
<dbReference type="InterPro" id="IPR036522">
    <property type="entry name" value="MoaC_sf"/>
</dbReference>
<dbReference type="InterPro" id="IPR050105">
    <property type="entry name" value="MoCo_biosynth_MoaA/MoaC"/>
</dbReference>
<dbReference type="InterPro" id="IPR002820">
    <property type="entry name" value="Mopterin_CF_biosynth-C_dom"/>
</dbReference>
<dbReference type="NCBIfam" id="TIGR00581">
    <property type="entry name" value="moaC"/>
    <property type="match status" value="1"/>
</dbReference>
<dbReference type="NCBIfam" id="NF006870">
    <property type="entry name" value="PRK09364.1"/>
    <property type="match status" value="1"/>
</dbReference>
<dbReference type="PANTHER" id="PTHR22960">
    <property type="entry name" value="MOLYBDOPTERIN COFACTOR SYNTHESIS PROTEIN A"/>
    <property type="match status" value="1"/>
</dbReference>
<dbReference type="Pfam" id="PF01967">
    <property type="entry name" value="MoaC"/>
    <property type="match status" value="1"/>
</dbReference>
<dbReference type="SUPFAM" id="SSF55040">
    <property type="entry name" value="Molybdenum cofactor biosynthesis protein C, MoaC"/>
    <property type="match status" value="1"/>
</dbReference>